<feature type="chain" id="PRO_0000353162" description="5-keto-4-deoxy-D-glucarate aldolase">
    <location>
        <begin position="1"/>
        <end position="256"/>
    </location>
</feature>
<feature type="active site" description="Proton acceptor" evidence="1">
    <location>
        <position position="50"/>
    </location>
</feature>
<feature type="binding site" evidence="1">
    <location>
        <position position="151"/>
    </location>
    <ligand>
        <name>substrate</name>
    </ligand>
</feature>
<feature type="binding site" evidence="1">
    <location>
        <position position="153"/>
    </location>
    <ligand>
        <name>Mg(2+)</name>
        <dbReference type="ChEBI" id="CHEBI:18420"/>
    </ligand>
</feature>
<feature type="binding site" evidence="1">
    <location>
        <position position="178"/>
    </location>
    <ligand>
        <name>substrate</name>
    </ligand>
</feature>
<feature type="binding site" evidence="1">
    <location>
        <position position="179"/>
    </location>
    <ligand>
        <name>Mg(2+)</name>
        <dbReference type="ChEBI" id="CHEBI:18420"/>
    </ligand>
</feature>
<feature type="binding site" evidence="1">
    <location>
        <position position="179"/>
    </location>
    <ligand>
        <name>substrate</name>
    </ligand>
</feature>
<feature type="site" description="Transition state stabilizer" evidence="1">
    <location>
        <position position="75"/>
    </location>
</feature>
<feature type="site" description="Increases basicity of active site His" evidence="1">
    <location>
        <position position="89"/>
    </location>
</feature>
<name>GARL_SHISS</name>
<gene>
    <name evidence="1" type="primary">garL</name>
    <name type="ordered locus">SSON_3281</name>
</gene>
<evidence type="ECO:0000255" key="1">
    <source>
        <dbReference type="HAMAP-Rule" id="MF_01291"/>
    </source>
</evidence>
<comment type="function">
    <text evidence="1">Catalyzes the reversible retro-aldol cleavage of both 5-keto-4-deoxy-D-glucarate and 2-keto-3-deoxy-D-glucarate to pyruvate and tartronic semialdehyde.</text>
</comment>
<comment type="catalytic activity">
    <reaction evidence="1">
        <text>5-dehydro-4-deoxy-D-glucarate = 2-hydroxy-3-oxopropanoate + pyruvate</text>
        <dbReference type="Rhea" id="RHEA:27726"/>
        <dbReference type="ChEBI" id="CHEBI:15361"/>
        <dbReference type="ChEBI" id="CHEBI:42819"/>
        <dbReference type="ChEBI" id="CHEBI:57978"/>
    </reaction>
</comment>
<comment type="catalytic activity">
    <reaction evidence="1">
        <text>2-dehydro-3-deoxy-D-glucarate = 2-hydroxy-3-oxopropanoate + pyruvate</text>
        <dbReference type="Rhea" id="RHEA:10268"/>
        <dbReference type="ChEBI" id="CHEBI:15361"/>
        <dbReference type="ChEBI" id="CHEBI:57978"/>
        <dbReference type="ChEBI" id="CHEBI:58098"/>
        <dbReference type="EC" id="4.1.2.20"/>
    </reaction>
</comment>
<comment type="cofactor">
    <cofactor evidence="1">
        <name>Mg(2+)</name>
        <dbReference type="ChEBI" id="CHEBI:18420"/>
    </cofactor>
    <text evidence="1">Binds 1 Mg(2+) ion per subunit.</text>
</comment>
<comment type="pathway">
    <text evidence="1">Carbohydrate acid metabolism; galactarate degradation; D-glycerate from galactarate: step 2/3.</text>
</comment>
<comment type="subunit">
    <text evidence="1">Homohexamer; trimer of dimers.</text>
</comment>
<comment type="similarity">
    <text evidence="1">Belongs to the HpcH/HpaI aldolase family. KDGluc aldolase subfamily.</text>
</comment>
<keyword id="KW-0456">Lyase</keyword>
<keyword id="KW-0460">Magnesium</keyword>
<keyword id="KW-0479">Metal-binding</keyword>
<keyword id="KW-1185">Reference proteome</keyword>
<accession>Q3YXA5</accession>
<protein>
    <recommendedName>
        <fullName evidence="1">5-keto-4-deoxy-D-glucarate aldolase</fullName>
        <shortName evidence="1">KDGluc aldolase</shortName>
        <shortName evidence="1">KDGlucA</shortName>
        <ecNumber evidence="1">4.1.2.20</ecNumber>
    </recommendedName>
    <alternativeName>
        <fullName evidence="1">2-dehydro-3-deoxy-D-glucarate aldolase</fullName>
    </alternativeName>
    <alternativeName>
        <fullName evidence="1">2-keto-3-deoxy-D-glucarate aldolase</fullName>
    </alternativeName>
    <alternativeName>
        <fullName evidence="1">5-dehydro-4-deoxy-D-glucarate aldolase</fullName>
    </alternativeName>
    <alternativeName>
        <fullName evidence="1">Alpha-keto-beta-deoxy-D-glucarate aldolase</fullName>
    </alternativeName>
</protein>
<sequence>MNNDVFPNKFKAALAAKQVQIGCWSALSNPISTEVLGLAGFDWLVLDGEHAPNDISTFIPQLMALKGSASAPVVRVPTNEPVIIKRLLDIGFYNFLIPFVETKEEAEQAVASTRYPPEGIRGVSVSHRTNMFGTVADYFAQSNKNITILVQIESQQGVDNVDAIAATEGVDGIFVGPSDLAAALGHLGNASHPDVQKAIQHIFNRASAHGKPSGILAPVEADARRYLEWGATFVAVGSDLGVFRSATQKLADTFKK</sequence>
<proteinExistence type="inferred from homology"/>
<dbReference type="EC" id="4.1.2.20" evidence="1"/>
<dbReference type="EMBL" id="CP000038">
    <property type="protein sequence ID" value="AAZ89857.1"/>
    <property type="molecule type" value="Genomic_DNA"/>
</dbReference>
<dbReference type="RefSeq" id="WP_001058234.1">
    <property type="nucleotide sequence ID" value="NC_007384.1"/>
</dbReference>
<dbReference type="SMR" id="Q3YXA5"/>
<dbReference type="KEGG" id="ssn:SSON_3281"/>
<dbReference type="HOGENOM" id="CLU_059964_1_0_6"/>
<dbReference type="UniPathway" id="UPA00565">
    <property type="reaction ID" value="UER00630"/>
</dbReference>
<dbReference type="Proteomes" id="UP000002529">
    <property type="component" value="Chromosome"/>
</dbReference>
<dbReference type="GO" id="GO:0005737">
    <property type="term" value="C:cytoplasm"/>
    <property type="evidence" value="ECO:0007669"/>
    <property type="project" value="TreeGrafter"/>
</dbReference>
<dbReference type="GO" id="GO:0008672">
    <property type="term" value="F:2-dehydro-3-deoxyglucarate aldolase activity"/>
    <property type="evidence" value="ECO:0007669"/>
    <property type="project" value="UniProtKB-UniRule"/>
</dbReference>
<dbReference type="GO" id="GO:0000287">
    <property type="term" value="F:magnesium ion binding"/>
    <property type="evidence" value="ECO:0007669"/>
    <property type="project" value="UniProtKB-UniRule"/>
</dbReference>
<dbReference type="GO" id="GO:0042838">
    <property type="term" value="P:D-glucarate catabolic process"/>
    <property type="evidence" value="ECO:0007669"/>
    <property type="project" value="UniProtKB-UniRule"/>
</dbReference>
<dbReference type="GO" id="GO:0046392">
    <property type="term" value="P:galactarate catabolic process"/>
    <property type="evidence" value="ECO:0007669"/>
    <property type="project" value="UniProtKB-UniRule"/>
</dbReference>
<dbReference type="FunFam" id="3.20.20.60:FF:000004">
    <property type="entry name" value="5-keto-4-deoxy-D-glucarate aldolase"/>
    <property type="match status" value="1"/>
</dbReference>
<dbReference type="Gene3D" id="3.20.20.60">
    <property type="entry name" value="Phosphoenolpyruvate-binding domains"/>
    <property type="match status" value="1"/>
</dbReference>
<dbReference type="HAMAP" id="MF_01291">
    <property type="entry name" value="KDGluc_aldolase"/>
    <property type="match status" value="1"/>
</dbReference>
<dbReference type="InterPro" id="IPR005000">
    <property type="entry name" value="Aldolase/citrate-lyase_domain"/>
</dbReference>
<dbReference type="InterPro" id="IPR017648">
    <property type="entry name" value="GarL"/>
</dbReference>
<dbReference type="InterPro" id="IPR050251">
    <property type="entry name" value="HpcH-HpaI_aldolase"/>
</dbReference>
<dbReference type="InterPro" id="IPR015813">
    <property type="entry name" value="Pyrv/PenolPyrv_kinase-like_dom"/>
</dbReference>
<dbReference type="InterPro" id="IPR040442">
    <property type="entry name" value="Pyrv_kinase-like_dom_sf"/>
</dbReference>
<dbReference type="NCBIfam" id="TIGR03239">
    <property type="entry name" value="GarL"/>
    <property type="match status" value="1"/>
</dbReference>
<dbReference type="NCBIfam" id="NF007849">
    <property type="entry name" value="PRK10558.1"/>
    <property type="match status" value="1"/>
</dbReference>
<dbReference type="PANTHER" id="PTHR30502">
    <property type="entry name" value="2-KETO-3-DEOXY-L-RHAMNONATE ALDOLASE"/>
    <property type="match status" value="1"/>
</dbReference>
<dbReference type="PANTHER" id="PTHR30502:SF4">
    <property type="entry name" value="5-KETO-4-DEOXY-D-GLUCARATE ALDOLASE"/>
    <property type="match status" value="1"/>
</dbReference>
<dbReference type="Pfam" id="PF03328">
    <property type="entry name" value="HpcH_HpaI"/>
    <property type="match status" value="1"/>
</dbReference>
<dbReference type="SUPFAM" id="SSF51621">
    <property type="entry name" value="Phosphoenolpyruvate/pyruvate domain"/>
    <property type="match status" value="1"/>
</dbReference>
<reference key="1">
    <citation type="journal article" date="2005" name="Nucleic Acids Res.">
        <title>Genome dynamics and diversity of Shigella species, the etiologic agents of bacillary dysentery.</title>
        <authorList>
            <person name="Yang F."/>
            <person name="Yang J."/>
            <person name="Zhang X."/>
            <person name="Chen L."/>
            <person name="Jiang Y."/>
            <person name="Yan Y."/>
            <person name="Tang X."/>
            <person name="Wang J."/>
            <person name="Xiong Z."/>
            <person name="Dong J."/>
            <person name="Xue Y."/>
            <person name="Zhu Y."/>
            <person name="Xu X."/>
            <person name="Sun L."/>
            <person name="Chen S."/>
            <person name="Nie H."/>
            <person name="Peng J."/>
            <person name="Xu J."/>
            <person name="Wang Y."/>
            <person name="Yuan Z."/>
            <person name="Wen Y."/>
            <person name="Yao Z."/>
            <person name="Shen Y."/>
            <person name="Qiang B."/>
            <person name="Hou Y."/>
            <person name="Yu J."/>
            <person name="Jin Q."/>
        </authorList>
    </citation>
    <scope>NUCLEOTIDE SEQUENCE [LARGE SCALE GENOMIC DNA]</scope>
    <source>
        <strain>Ss046</strain>
    </source>
</reference>
<organism>
    <name type="scientific">Shigella sonnei (strain Ss046)</name>
    <dbReference type="NCBI Taxonomy" id="300269"/>
    <lineage>
        <taxon>Bacteria</taxon>
        <taxon>Pseudomonadati</taxon>
        <taxon>Pseudomonadota</taxon>
        <taxon>Gammaproteobacteria</taxon>
        <taxon>Enterobacterales</taxon>
        <taxon>Enterobacteriaceae</taxon>
        <taxon>Shigella</taxon>
    </lineage>
</organism>